<protein>
    <recommendedName>
        <fullName>Trk system potassium uptake protein TrkA homolog</fullName>
        <shortName>K(+)-uptake protein TrkA homolog</shortName>
    </recommendedName>
</protein>
<gene>
    <name type="primary">trkA</name>
    <name type="ordered locus">PH1984</name>
</gene>
<sequence>MYIVIMGAGRIGTLVARMLESEGHDVAIIEMNRERAREISEYISGLVIEGDATDQKVLENANIKNANAFAALTGKDDANILACILAKHLNPNIMTILRITDPGKKKIFEDVKELKTYFDIVVSPEDIAANYIFRTLVTPGFNRVLLPREGAEIIQFQIDEDCEVAGKPVKELNLPKDSLIIAVYDEKGNLTIPSGDTIIPKKGQVIIFAKNSALQEVKKIMEKKKKEQ</sequence>
<name>TRKA_PYRHO</name>
<accession>O57719</accession>
<feature type="chain" id="PRO_0000148728" description="Trk system potassium uptake protein TrkA homolog">
    <location>
        <begin position="1"/>
        <end position="228"/>
    </location>
</feature>
<feature type="domain" description="RCK N-terminal" evidence="2">
    <location>
        <begin position="1"/>
        <end position="122"/>
    </location>
</feature>
<feature type="domain" description="RCK C-terminal" evidence="3">
    <location>
        <begin position="141"/>
        <end position="223"/>
    </location>
</feature>
<feature type="binding site" description="in other chain" evidence="1">
    <location>
        <begin position="7"/>
        <end position="11"/>
    </location>
    <ligand>
        <name>NAD(+)</name>
        <dbReference type="ChEBI" id="CHEBI:57540"/>
        <note>ligand shared between dimeric partners</note>
    </ligand>
</feature>
<feature type="binding site" description="in other chain" evidence="1">
    <location>
        <position position="30"/>
    </location>
    <ligand>
        <name>NAD(+)</name>
        <dbReference type="ChEBI" id="CHEBI:57540"/>
        <note>ligand shared between dimeric partners</note>
    </ligand>
</feature>
<feature type="binding site" description="in other chain" evidence="1">
    <location>
        <position position="51"/>
    </location>
    <ligand>
        <name>NAD(+)</name>
        <dbReference type="ChEBI" id="CHEBI:57540"/>
        <note>ligand shared between dimeric partners</note>
    </ligand>
</feature>
<feature type="binding site" description="in other chain" evidence="1">
    <location>
        <begin position="73"/>
        <end position="74"/>
    </location>
    <ligand>
        <name>NAD(+)</name>
        <dbReference type="ChEBI" id="CHEBI:57540"/>
        <note>ligand shared between dimeric partners</note>
    </ligand>
</feature>
<feature type="binding site" evidence="1">
    <location>
        <position position="98"/>
    </location>
    <ligand>
        <name>NAD(+)</name>
        <dbReference type="ChEBI" id="CHEBI:57540"/>
        <note>ligand shared between dimeric partners</note>
    </ligand>
</feature>
<proteinExistence type="inferred from homology"/>
<evidence type="ECO:0000250" key="1"/>
<evidence type="ECO:0000255" key="2">
    <source>
        <dbReference type="PROSITE-ProRule" id="PRU00543"/>
    </source>
</evidence>
<evidence type="ECO:0000255" key="3">
    <source>
        <dbReference type="PROSITE-ProRule" id="PRU00544"/>
    </source>
</evidence>
<comment type="function">
    <text evidence="1">Part of a potassium transport system.</text>
</comment>
<comment type="domain">
    <text evidence="1">The RCK N-terminal domain binds NAD and possibly other effectors. This is expected to cause a conformation change that regulates potassium transport (By similarity).</text>
</comment>
<dbReference type="EMBL" id="BA000001">
    <property type="protein sequence ID" value="BAA31111.1"/>
    <property type="molecule type" value="Genomic_DNA"/>
</dbReference>
<dbReference type="PIR" id="H71214">
    <property type="entry name" value="H71214"/>
</dbReference>
<dbReference type="RefSeq" id="WP_010886046.1">
    <property type="nucleotide sequence ID" value="NC_000961.1"/>
</dbReference>
<dbReference type="SMR" id="O57719"/>
<dbReference type="STRING" id="70601.gene:9378997"/>
<dbReference type="EnsemblBacteria" id="BAA31111">
    <property type="protein sequence ID" value="BAA31111"/>
    <property type="gene ID" value="BAA31111"/>
</dbReference>
<dbReference type="GeneID" id="1442828"/>
<dbReference type="KEGG" id="pho:PH1984"/>
<dbReference type="eggNOG" id="arCOG01957">
    <property type="taxonomic scope" value="Archaea"/>
</dbReference>
<dbReference type="OrthoDB" id="24929at2157"/>
<dbReference type="Proteomes" id="UP000000752">
    <property type="component" value="Chromosome"/>
</dbReference>
<dbReference type="GO" id="GO:0005886">
    <property type="term" value="C:plasma membrane"/>
    <property type="evidence" value="ECO:0007669"/>
    <property type="project" value="InterPro"/>
</dbReference>
<dbReference type="GO" id="GO:0015079">
    <property type="term" value="F:potassium ion transmembrane transporter activity"/>
    <property type="evidence" value="ECO:0007669"/>
    <property type="project" value="InterPro"/>
</dbReference>
<dbReference type="Gene3D" id="3.40.50.720">
    <property type="entry name" value="NAD(P)-binding Rossmann-like Domain"/>
    <property type="match status" value="1"/>
</dbReference>
<dbReference type="Gene3D" id="3.30.70.1450">
    <property type="entry name" value="Regulator of K+ conductance, C-terminal domain"/>
    <property type="match status" value="1"/>
</dbReference>
<dbReference type="InterPro" id="IPR006036">
    <property type="entry name" value="K_uptake_TrkA"/>
</dbReference>
<dbReference type="InterPro" id="IPR036291">
    <property type="entry name" value="NAD(P)-bd_dom_sf"/>
</dbReference>
<dbReference type="InterPro" id="IPR006037">
    <property type="entry name" value="RCK_C"/>
</dbReference>
<dbReference type="InterPro" id="IPR036721">
    <property type="entry name" value="RCK_C_sf"/>
</dbReference>
<dbReference type="InterPro" id="IPR003148">
    <property type="entry name" value="RCK_N"/>
</dbReference>
<dbReference type="InterPro" id="IPR050721">
    <property type="entry name" value="Trk_Ktr_HKT_K-transport"/>
</dbReference>
<dbReference type="PANTHER" id="PTHR43833">
    <property type="entry name" value="POTASSIUM CHANNEL PROTEIN 2-RELATED-RELATED"/>
    <property type="match status" value="1"/>
</dbReference>
<dbReference type="PANTHER" id="PTHR43833:SF5">
    <property type="entry name" value="TRK SYSTEM POTASSIUM UPTAKE PROTEIN TRKA"/>
    <property type="match status" value="1"/>
</dbReference>
<dbReference type="Pfam" id="PF02080">
    <property type="entry name" value="TrkA_C"/>
    <property type="match status" value="1"/>
</dbReference>
<dbReference type="Pfam" id="PF02254">
    <property type="entry name" value="TrkA_N"/>
    <property type="match status" value="1"/>
</dbReference>
<dbReference type="PRINTS" id="PR00335">
    <property type="entry name" value="KUPTAKETRKA"/>
</dbReference>
<dbReference type="SUPFAM" id="SSF51735">
    <property type="entry name" value="NAD(P)-binding Rossmann-fold domains"/>
    <property type="match status" value="1"/>
</dbReference>
<dbReference type="SUPFAM" id="SSF116726">
    <property type="entry name" value="TrkA C-terminal domain-like"/>
    <property type="match status" value="1"/>
</dbReference>
<dbReference type="PROSITE" id="PS51202">
    <property type="entry name" value="RCK_C"/>
    <property type="match status" value="1"/>
</dbReference>
<dbReference type="PROSITE" id="PS51201">
    <property type="entry name" value="RCK_N"/>
    <property type="match status" value="1"/>
</dbReference>
<keyword id="KW-0406">Ion transport</keyword>
<keyword id="KW-0520">NAD</keyword>
<keyword id="KW-0630">Potassium</keyword>
<keyword id="KW-0633">Potassium transport</keyword>
<keyword id="KW-0813">Transport</keyword>
<organism>
    <name type="scientific">Pyrococcus horikoshii (strain ATCC 700860 / DSM 12428 / JCM 9974 / NBRC 100139 / OT-3)</name>
    <dbReference type="NCBI Taxonomy" id="70601"/>
    <lineage>
        <taxon>Archaea</taxon>
        <taxon>Methanobacteriati</taxon>
        <taxon>Methanobacteriota</taxon>
        <taxon>Thermococci</taxon>
        <taxon>Thermococcales</taxon>
        <taxon>Thermococcaceae</taxon>
        <taxon>Pyrococcus</taxon>
    </lineage>
</organism>
<reference key="1">
    <citation type="journal article" date="1998" name="DNA Res.">
        <title>Complete sequence and gene organization of the genome of a hyper-thermophilic archaebacterium, Pyrococcus horikoshii OT3.</title>
        <authorList>
            <person name="Kawarabayasi Y."/>
            <person name="Sawada M."/>
            <person name="Horikawa H."/>
            <person name="Haikawa Y."/>
            <person name="Hino Y."/>
            <person name="Yamamoto S."/>
            <person name="Sekine M."/>
            <person name="Baba S."/>
            <person name="Kosugi H."/>
            <person name="Hosoyama A."/>
            <person name="Nagai Y."/>
            <person name="Sakai M."/>
            <person name="Ogura K."/>
            <person name="Otsuka R."/>
            <person name="Nakazawa H."/>
            <person name="Takamiya M."/>
            <person name="Ohfuku Y."/>
            <person name="Funahashi T."/>
            <person name="Tanaka T."/>
            <person name="Kudoh Y."/>
            <person name="Yamazaki J."/>
            <person name="Kushida N."/>
            <person name="Oguchi A."/>
            <person name="Aoki K."/>
            <person name="Yoshizawa T."/>
            <person name="Nakamura Y."/>
            <person name="Robb F.T."/>
            <person name="Horikoshi K."/>
            <person name="Masuchi Y."/>
            <person name="Shizuya H."/>
            <person name="Kikuchi H."/>
        </authorList>
    </citation>
    <scope>NUCLEOTIDE SEQUENCE [LARGE SCALE GENOMIC DNA]</scope>
    <source>
        <strain>ATCC 700860 / DSM 12428 / JCM 9974 / NBRC 100139 / OT-3</strain>
    </source>
</reference>